<reference evidence="8" key="1">
    <citation type="journal article" date="2010" name="Biochem. Pharmacol.">
        <title>Characterisation of the heterotrimeric presynaptic phospholipase A(2) neurotoxin complex from the venom of the common death adder (Acanthophis antarcticus).</title>
        <authorList>
            <person name="Blacklow B."/>
            <person name="Escoubas P."/>
            <person name="Nicholson G.M."/>
        </authorList>
    </citation>
    <scope>PROTEIN SEQUENCE</scope>
    <scope>FUNCTION</scope>
    <scope>CATALYTIC ACTIVITY</scope>
    <scope>BIOPHYSICOCHEMICAL PROPERTIES</scope>
    <scope>SUBUNIT</scope>
    <scope>SUBCELLULAR LOCATION</scope>
    <scope>TISSUE SPECIFICITY</scope>
    <scope>MASS SPECTROMETRY</scope>
    <source>
        <strain evidence="6">New South Wales</strain>
        <tissue evidence="6">Venom</tissue>
    </source>
</reference>
<accession>P86523</accession>
<evidence type="ECO:0000250" key="1"/>
<evidence type="ECO:0000250" key="2">
    <source>
        <dbReference type="UniProtKB" id="P00608"/>
    </source>
</evidence>
<evidence type="ECO:0000255" key="3"/>
<evidence type="ECO:0000255" key="4">
    <source>
        <dbReference type="PROSITE-ProRule" id="PRU10035"/>
    </source>
</evidence>
<evidence type="ECO:0000255" key="5">
    <source>
        <dbReference type="PROSITE-ProRule" id="PRU10036"/>
    </source>
</evidence>
<evidence type="ECO:0000269" key="6">
    <source>
    </source>
</evidence>
<evidence type="ECO:0000303" key="7">
    <source>
    </source>
</evidence>
<evidence type="ECO:0000305" key="8"/>
<comment type="function">
    <text evidence="6">Heterotrimer: presynaptic neurotoxin. Inhibits nerve-evoked twitch contractions but not responses to cholinergic agonists acetylcholine and carbachol and to depolarizing agonist KCl. Causes a fade in tetanic contractions. Displays a triphasic mode of action with depression, enhancement and blockade of neurotransmission. Does not display myotoxic activity such as changes in baseline muscle tension or inhibition of directly stimulated muscle twitches. All subunits are necessary for maximum toxicity.</text>
</comment>
<comment type="function">
    <text evidence="6">Monomer: Snake venom phospholipase A2 (PLA2) alpha chain that has enzymatic activity. PLA2 catalyzes the calcium-dependent hydrolysis of the 2-acyl groups in 3-sn-phosphoglycerides.</text>
</comment>
<comment type="catalytic activity">
    <reaction evidence="4 5 6">
        <text>a 1,2-diacyl-sn-glycero-3-phosphocholine + H2O = a 1-acyl-sn-glycero-3-phosphocholine + a fatty acid + H(+)</text>
        <dbReference type="Rhea" id="RHEA:15801"/>
        <dbReference type="ChEBI" id="CHEBI:15377"/>
        <dbReference type="ChEBI" id="CHEBI:15378"/>
        <dbReference type="ChEBI" id="CHEBI:28868"/>
        <dbReference type="ChEBI" id="CHEBI:57643"/>
        <dbReference type="ChEBI" id="CHEBI:58168"/>
        <dbReference type="EC" id="3.1.1.4"/>
    </reaction>
</comment>
<comment type="cofactor">
    <cofactor evidence="1">
        <name>Ca(2+)</name>
        <dbReference type="ChEBI" id="CHEBI:29108"/>
    </cofactor>
    <text evidence="1">Binds 1 Ca(2+) ion.</text>
</comment>
<comment type="biophysicochemical properties">
    <kinetics>
        <Vmax evidence="6">211.0 umol/min/mg enzyme</Vmax>
    </kinetics>
</comment>
<comment type="subunit">
    <text evidence="6">Heterotrimer of alpha, beta and gamma chains, each related to PLA2.</text>
</comment>
<comment type="subcellular location">
    <subcellularLocation>
        <location evidence="6">Secreted</location>
    </subcellularLocation>
</comment>
<comment type="tissue specificity">
    <text evidence="6">Expressed by the venom gland.</text>
</comment>
<comment type="mass spectrometry" mass="13809.0" method="Electrospray" evidence="6"/>
<comment type="miscellaneous">
    <text>Preincubation of this protein with monovalent antivenom or suramin prevents or delays toxicity, respectively. Antivenom fails to reverse neurotoxicity when applied at point of 90% neuromuscular blockade. Treatment of this protein with 4-bromophenacyl bromide drastically reduces enzymatic activity and toxicity, presumably by alkylating a His residue at the active site.</text>
</comment>
<comment type="similarity">
    <text evidence="3">Belongs to the phospholipase A2 family. Group I subfamily.</text>
</comment>
<dbReference type="EC" id="3.1.1.4"/>
<dbReference type="SMR" id="P86523"/>
<dbReference type="GO" id="GO:0005576">
    <property type="term" value="C:extracellular region"/>
    <property type="evidence" value="ECO:0007669"/>
    <property type="project" value="UniProtKB-SubCell"/>
</dbReference>
<dbReference type="GO" id="GO:0046872">
    <property type="term" value="F:metal ion binding"/>
    <property type="evidence" value="ECO:0007669"/>
    <property type="project" value="UniProtKB-KW"/>
</dbReference>
<dbReference type="GO" id="GO:0004623">
    <property type="term" value="F:phospholipase A2 activity"/>
    <property type="evidence" value="ECO:0007669"/>
    <property type="project" value="UniProtKB-EC"/>
</dbReference>
<dbReference type="GO" id="GO:0090729">
    <property type="term" value="F:toxin activity"/>
    <property type="evidence" value="ECO:0007669"/>
    <property type="project" value="UniProtKB-KW"/>
</dbReference>
<dbReference type="GO" id="GO:0050482">
    <property type="term" value="P:arachidonate secretion"/>
    <property type="evidence" value="ECO:0007669"/>
    <property type="project" value="InterPro"/>
</dbReference>
<dbReference type="GO" id="GO:0016042">
    <property type="term" value="P:lipid catabolic process"/>
    <property type="evidence" value="ECO:0007669"/>
    <property type="project" value="UniProtKB-KW"/>
</dbReference>
<dbReference type="GO" id="GO:0006644">
    <property type="term" value="P:phospholipid metabolic process"/>
    <property type="evidence" value="ECO:0007669"/>
    <property type="project" value="InterPro"/>
</dbReference>
<dbReference type="InterPro" id="IPR036444">
    <property type="entry name" value="PLipase_A2_dom_sf"/>
</dbReference>
<dbReference type="SUPFAM" id="SSF48619">
    <property type="entry name" value="Phospholipase A2, PLA2"/>
    <property type="match status" value="1"/>
</dbReference>
<proteinExistence type="evidence at protein level"/>
<keyword id="KW-0106">Calcium</keyword>
<keyword id="KW-0903">Direct protein sequencing</keyword>
<keyword id="KW-1015">Disulfide bond</keyword>
<keyword id="KW-0378">Hydrolase</keyword>
<keyword id="KW-0442">Lipid degradation</keyword>
<keyword id="KW-0443">Lipid metabolism</keyword>
<keyword id="KW-0479">Metal-binding</keyword>
<keyword id="KW-0528">Neurotoxin</keyword>
<keyword id="KW-0638">Presynaptic neurotoxin</keyword>
<keyword id="KW-0964">Secreted</keyword>
<keyword id="KW-0800">Toxin</keyword>
<sequence length="27" mass="3272">NLLQFGFMIRCANKRRRPVWPYEESGC</sequence>
<organism>
    <name type="scientific">Acanthophis antarcticus</name>
    <name type="common">Common death adder</name>
    <dbReference type="NCBI Taxonomy" id="8605"/>
    <lineage>
        <taxon>Eukaryota</taxon>
        <taxon>Metazoa</taxon>
        <taxon>Chordata</taxon>
        <taxon>Craniata</taxon>
        <taxon>Vertebrata</taxon>
        <taxon>Euteleostomi</taxon>
        <taxon>Lepidosauria</taxon>
        <taxon>Squamata</taxon>
        <taxon>Bifurcata</taxon>
        <taxon>Unidentata</taxon>
        <taxon>Episquamata</taxon>
        <taxon>Toxicofera</taxon>
        <taxon>Serpentes</taxon>
        <taxon>Colubroidea</taxon>
        <taxon>Elapidae</taxon>
        <taxon>Hydrophiinae</taxon>
        <taxon>Acanthophis</taxon>
    </lineage>
</organism>
<protein>
    <recommendedName>
        <fullName>Phospholipase A2 P-elapitoxin-Aa1a alpha chain</fullName>
        <shortName evidence="7">P-EPTX-Aa1a alpha chain</shortName>
        <shortName>svPLA2</shortName>
        <ecNumber>3.1.1.4</ecNumber>
    </recommendedName>
    <alternativeName>
        <fullName evidence="2">Phosphatidylcholine 2-acylhydrolase</fullName>
    </alternativeName>
</protein>
<name>PA2AA_ACAAN</name>
<feature type="chain" id="PRO_0000395307" description="Phospholipase A2 P-elapitoxin-Aa1a alpha chain">
    <location>
        <begin position="1"/>
        <end position="27" status="greater than"/>
    </location>
</feature>
<feature type="disulfide bond" evidence="2">
    <location>
        <begin position="11"/>
        <end status="unknown"/>
    </location>
</feature>
<feature type="disulfide bond" evidence="2">
    <location>
        <begin position="27"/>
        <end status="unknown"/>
    </location>
</feature>
<feature type="non-terminal residue" evidence="7">
    <location>
        <position position="27"/>
    </location>
</feature>